<proteinExistence type="inferred from homology"/>
<protein>
    <recommendedName>
        <fullName evidence="1">Adenine phosphoribosyltransferase</fullName>
        <shortName evidence="1">APRT</shortName>
        <ecNumber evidence="1">2.4.2.7</ecNumber>
    </recommendedName>
</protein>
<name>APT_CERS5</name>
<gene>
    <name evidence="1" type="primary">apt</name>
    <name type="ordered locus">Rsph17025_0625</name>
</gene>
<reference key="1">
    <citation type="submission" date="2007-04" db="EMBL/GenBank/DDBJ databases">
        <title>Complete sequence of chromosome of Rhodobacter sphaeroides ATCC 17025.</title>
        <authorList>
            <consortium name="US DOE Joint Genome Institute"/>
            <person name="Copeland A."/>
            <person name="Lucas S."/>
            <person name="Lapidus A."/>
            <person name="Barry K."/>
            <person name="Detter J.C."/>
            <person name="Glavina del Rio T."/>
            <person name="Hammon N."/>
            <person name="Israni S."/>
            <person name="Dalin E."/>
            <person name="Tice H."/>
            <person name="Pitluck S."/>
            <person name="Chertkov O."/>
            <person name="Brettin T."/>
            <person name="Bruce D."/>
            <person name="Han C."/>
            <person name="Schmutz J."/>
            <person name="Larimer F."/>
            <person name="Land M."/>
            <person name="Hauser L."/>
            <person name="Kyrpides N."/>
            <person name="Kim E."/>
            <person name="Richardson P."/>
            <person name="Mackenzie C."/>
            <person name="Choudhary M."/>
            <person name="Donohue T.J."/>
            <person name="Kaplan S."/>
        </authorList>
    </citation>
    <scope>NUCLEOTIDE SEQUENCE [LARGE SCALE GENOMIC DNA]</scope>
    <source>
        <strain>ATCC 17025 / ATH 2.4.3</strain>
    </source>
</reference>
<keyword id="KW-0963">Cytoplasm</keyword>
<keyword id="KW-0328">Glycosyltransferase</keyword>
<keyword id="KW-0660">Purine salvage</keyword>
<keyword id="KW-0808">Transferase</keyword>
<feature type="chain" id="PRO_0000321393" description="Adenine phosphoribosyltransferase">
    <location>
        <begin position="1"/>
        <end position="178"/>
    </location>
</feature>
<accession>A4WQ67</accession>
<dbReference type="EC" id="2.4.2.7" evidence="1"/>
<dbReference type="EMBL" id="CP000661">
    <property type="protein sequence ID" value="ABP69531.1"/>
    <property type="molecule type" value="Genomic_DNA"/>
</dbReference>
<dbReference type="SMR" id="A4WQ67"/>
<dbReference type="STRING" id="349102.Rsph17025_0625"/>
<dbReference type="KEGG" id="rsq:Rsph17025_0625"/>
<dbReference type="eggNOG" id="COG0503">
    <property type="taxonomic scope" value="Bacteria"/>
</dbReference>
<dbReference type="HOGENOM" id="CLU_063339_3_0_5"/>
<dbReference type="BioCyc" id="RSPH349102:G1G8M-646-MONOMER"/>
<dbReference type="UniPathway" id="UPA00588">
    <property type="reaction ID" value="UER00646"/>
</dbReference>
<dbReference type="GO" id="GO:0005737">
    <property type="term" value="C:cytoplasm"/>
    <property type="evidence" value="ECO:0007669"/>
    <property type="project" value="UniProtKB-SubCell"/>
</dbReference>
<dbReference type="GO" id="GO:0002055">
    <property type="term" value="F:adenine binding"/>
    <property type="evidence" value="ECO:0007669"/>
    <property type="project" value="TreeGrafter"/>
</dbReference>
<dbReference type="GO" id="GO:0003999">
    <property type="term" value="F:adenine phosphoribosyltransferase activity"/>
    <property type="evidence" value="ECO:0007669"/>
    <property type="project" value="UniProtKB-UniRule"/>
</dbReference>
<dbReference type="GO" id="GO:0016208">
    <property type="term" value="F:AMP binding"/>
    <property type="evidence" value="ECO:0007669"/>
    <property type="project" value="TreeGrafter"/>
</dbReference>
<dbReference type="GO" id="GO:0006168">
    <property type="term" value="P:adenine salvage"/>
    <property type="evidence" value="ECO:0007669"/>
    <property type="project" value="InterPro"/>
</dbReference>
<dbReference type="GO" id="GO:0044209">
    <property type="term" value="P:AMP salvage"/>
    <property type="evidence" value="ECO:0007669"/>
    <property type="project" value="UniProtKB-UniRule"/>
</dbReference>
<dbReference type="GO" id="GO:0006166">
    <property type="term" value="P:purine ribonucleoside salvage"/>
    <property type="evidence" value="ECO:0007669"/>
    <property type="project" value="UniProtKB-KW"/>
</dbReference>
<dbReference type="CDD" id="cd06223">
    <property type="entry name" value="PRTases_typeI"/>
    <property type="match status" value="1"/>
</dbReference>
<dbReference type="FunFam" id="3.40.50.2020:FF:000021">
    <property type="entry name" value="Adenine phosphoribosyltransferase"/>
    <property type="match status" value="1"/>
</dbReference>
<dbReference type="Gene3D" id="3.40.50.2020">
    <property type="match status" value="1"/>
</dbReference>
<dbReference type="HAMAP" id="MF_00004">
    <property type="entry name" value="Aden_phosphoribosyltr"/>
    <property type="match status" value="1"/>
</dbReference>
<dbReference type="InterPro" id="IPR005764">
    <property type="entry name" value="Ade_phspho_trans"/>
</dbReference>
<dbReference type="InterPro" id="IPR000836">
    <property type="entry name" value="PRibTrfase_dom"/>
</dbReference>
<dbReference type="InterPro" id="IPR029057">
    <property type="entry name" value="PRTase-like"/>
</dbReference>
<dbReference type="InterPro" id="IPR050054">
    <property type="entry name" value="UPRTase/APRTase"/>
</dbReference>
<dbReference type="NCBIfam" id="TIGR01090">
    <property type="entry name" value="apt"/>
    <property type="match status" value="1"/>
</dbReference>
<dbReference type="NCBIfam" id="NF002634">
    <property type="entry name" value="PRK02304.1-3"/>
    <property type="match status" value="1"/>
</dbReference>
<dbReference type="NCBIfam" id="NF002636">
    <property type="entry name" value="PRK02304.1-5"/>
    <property type="match status" value="1"/>
</dbReference>
<dbReference type="PANTHER" id="PTHR32315">
    <property type="entry name" value="ADENINE PHOSPHORIBOSYLTRANSFERASE"/>
    <property type="match status" value="1"/>
</dbReference>
<dbReference type="PANTHER" id="PTHR32315:SF3">
    <property type="entry name" value="ADENINE PHOSPHORIBOSYLTRANSFERASE"/>
    <property type="match status" value="1"/>
</dbReference>
<dbReference type="Pfam" id="PF00156">
    <property type="entry name" value="Pribosyltran"/>
    <property type="match status" value="1"/>
</dbReference>
<dbReference type="SUPFAM" id="SSF53271">
    <property type="entry name" value="PRTase-like"/>
    <property type="match status" value="1"/>
</dbReference>
<dbReference type="PROSITE" id="PS00103">
    <property type="entry name" value="PUR_PYR_PR_TRANSFER"/>
    <property type="match status" value="1"/>
</dbReference>
<organism>
    <name type="scientific">Cereibacter sphaeroides (strain ATCC 17025 / ATH 2.4.3)</name>
    <name type="common">Rhodobacter sphaeroides</name>
    <dbReference type="NCBI Taxonomy" id="349102"/>
    <lineage>
        <taxon>Bacteria</taxon>
        <taxon>Pseudomonadati</taxon>
        <taxon>Pseudomonadota</taxon>
        <taxon>Alphaproteobacteria</taxon>
        <taxon>Rhodobacterales</taxon>
        <taxon>Paracoccaceae</taxon>
        <taxon>Cereibacter</taxon>
    </lineage>
</organism>
<evidence type="ECO:0000255" key="1">
    <source>
        <dbReference type="HAMAP-Rule" id="MF_00004"/>
    </source>
</evidence>
<comment type="function">
    <text evidence="1">Catalyzes a salvage reaction resulting in the formation of AMP, that is energically less costly than de novo synthesis.</text>
</comment>
<comment type="catalytic activity">
    <reaction evidence="1">
        <text>AMP + diphosphate = 5-phospho-alpha-D-ribose 1-diphosphate + adenine</text>
        <dbReference type="Rhea" id="RHEA:16609"/>
        <dbReference type="ChEBI" id="CHEBI:16708"/>
        <dbReference type="ChEBI" id="CHEBI:33019"/>
        <dbReference type="ChEBI" id="CHEBI:58017"/>
        <dbReference type="ChEBI" id="CHEBI:456215"/>
        <dbReference type="EC" id="2.4.2.7"/>
    </reaction>
</comment>
<comment type="pathway">
    <text evidence="1">Purine metabolism; AMP biosynthesis via salvage pathway; AMP from adenine: step 1/1.</text>
</comment>
<comment type="subunit">
    <text evidence="1">Homodimer.</text>
</comment>
<comment type="subcellular location">
    <subcellularLocation>
        <location evidence="1">Cytoplasm</location>
    </subcellularLocation>
</comment>
<comment type="similarity">
    <text evidence="1">Belongs to the purine/pyrimidine phosphoribosyltransferase family.</text>
</comment>
<sequence>MTNKSVRDYIRTIVDFPHEGILFRDVTTLFADPRGFRIAIDQLLAPYAGMRFDKVAGLEARGFILGGAVAHQLSTGFVPIRKKGKLPGRTVSVSYQLEYGEAVVKVHDDAIQAGERILLVDDLLATGGTAEAGIRLIEQLGGEVVGCAFVVDLPDLGGRKKLEAMGMEVHALCAFEGL</sequence>